<organism>
    <name type="scientific">Candida albicans (strain WO-1)</name>
    <name type="common">Yeast</name>
    <dbReference type="NCBI Taxonomy" id="294748"/>
    <lineage>
        <taxon>Eukaryota</taxon>
        <taxon>Fungi</taxon>
        <taxon>Dikarya</taxon>
        <taxon>Ascomycota</taxon>
        <taxon>Saccharomycotina</taxon>
        <taxon>Pichiomycetes</taxon>
        <taxon>Debaryomycetaceae</taxon>
        <taxon>Candida/Lodderomyces clade</taxon>
        <taxon>Candida</taxon>
    </lineage>
</organism>
<reference key="1">
    <citation type="journal article" date="2009" name="Nature">
        <title>Evolution of pathogenicity and sexual reproduction in eight Candida genomes.</title>
        <authorList>
            <person name="Butler G."/>
            <person name="Rasmussen M.D."/>
            <person name="Lin M.F."/>
            <person name="Santos M.A.S."/>
            <person name="Sakthikumar S."/>
            <person name="Munro C.A."/>
            <person name="Rheinbay E."/>
            <person name="Grabherr M."/>
            <person name="Forche A."/>
            <person name="Reedy J.L."/>
            <person name="Agrafioti I."/>
            <person name="Arnaud M.B."/>
            <person name="Bates S."/>
            <person name="Brown A.J.P."/>
            <person name="Brunke S."/>
            <person name="Costanzo M.C."/>
            <person name="Fitzpatrick D.A."/>
            <person name="de Groot P.W.J."/>
            <person name="Harris D."/>
            <person name="Hoyer L.L."/>
            <person name="Hube B."/>
            <person name="Klis F.M."/>
            <person name="Kodira C."/>
            <person name="Lennard N."/>
            <person name="Logue M.E."/>
            <person name="Martin R."/>
            <person name="Neiman A.M."/>
            <person name="Nikolaou E."/>
            <person name="Quail M.A."/>
            <person name="Quinn J."/>
            <person name="Santos M.C."/>
            <person name="Schmitzberger F.F."/>
            <person name="Sherlock G."/>
            <person name="Shah P."/>
            <person name="Silverstein K.A.T."/>
            <person name="Skrzypek M.S."/>
            <person name="Soll D."/>
            <person name="Staggs R."/>
            <person name="Stansfield I."/>
            <person name="Stumpf M.P.H."/>
            <person name="Sudbery P.E."/>
            <person name="Srikantha T."/>
            <person name="Zeng Q."/>
            <person name="Berman J."/>
            <person name="Berriman M."/>
            <person name="Heitman J."/>
            <person name="Gow N.A.R."/>
            <person name="Lorenz M.C."/>
            <person name="Birren B.W."/>
            <person name="Kellis M."/>
            <person name="Cuomo C.A."/>
        </authorList>
    </citation>
    <scope>NUCLEOTIDE SEQUENCE [LARGE SCALE GENOMIC DNA]</scope>
    <source>
        <strain>WO-1</strain>
    </source>
</reference>
<gene>
    <name type="primary">SHO1</name>
    <name type="ORF">CAWG_00515</name>
</gene>
<sequence length="385" mass="40816">MGFSLSNFTSDPFAISTVSFGIMAWVVAIAGAASSKQENFPHFSWWGISYQIVIILIIFVLYANNNIELYKFTLVGLVSIAFIYTTNSTNNLIYNSNSAGNLCCAAGCILLSILNLIWILYFGGHPESPTNQFIDSFSLRGQGHEQLGSGSHNHNANNANNNIPIGAGNAIIGKGEMSPYDDRFAASGVNQPTSESLRLASGPQMGNGPFTTTGAIINPNLQQPLSGSIGGSAHHTPTNINNNNNNNTGYMTSSHLTGLENFSSPHVPGSGTGAGLGVGAGRDLTHNSNGGGGSGGGPASANNSNNTNKRNTIYTDSETGTGITFRYKAKALYSYDANPDDINEISFVKDEILEVDDIDGKWWQARRANGQVGICPSNYVKLLDT</sequence>
<accession>C4YDC4</accession>
<name>SHO1_CANAW</name>
<protein>
    <recommendedName>
        <fullName>High osmolarity signaling protein SHO1</fullName>
    </recommendedName>
    <alternativeName>
        <fullName>Osmosensor SHO1</fullName>
    </alternativeName>
</protein>
<keyword id="KW-1003">Cell membrane</keyword>
<keyword id="KW-0472">Membrane</keyword>
<keyword id="KW-0728">SH3 domain</keyword>
<keyword id="KW-0346">Stress response</keyword>
<keyword id="KW-0812">Transmembrane</keyword>
<keyword id="KW-1133">Transmembrane helix</keyword>
<comment type="function">
    <text evidence="1">Plasma membrane osmosensor that activates the high osmolarity glycerol (HOG) MAPK signaling pathway in response to high osmolarity. Mediates resistance to oxidative stress. Controls the activation of the CEK1 MAP kinase. Influences the molecular weight and polymer distribution of cell wall mannan. Involvoved in invasive filamentation into semi-solid medium and plays a role in morphological dimorphic transition which is a differentiation program characteristic of C.albicans and which is known to play a major role in pathogenesis (By similarity).</text>
</comment>
<comment type="subunit">
    <text evidence="1">Forms homooligomers.</text>
</comment>
<comment type="subcellular location">
    <subcellularLocation>
        <location evidence="1">Cell membrane</location>
        <topology evidence="1">Multi-pass membrane protein</topology>
    </subcellularLocation>
</comment>
<comment type="similarity">
    <text evidence="5">Belongs to the SHO1 family.</text>
</comment>
<dbReference type="EMBL" id="CH672346">
    <property type="protein sequence ID" value="EEQ42310.1"/>
    <property type="molecule type" value="Genomic_DNA"/>
</dbReference>
<dbReference type="SMR" id="C4YDC4"/>
<dbReference type="PaxDb" id="5476-C4YDC4"/>
<dbReference type="VEuPathDB" id="FungiDB:CAWG_00515"/>
<dbReference type="HOGENOM" id="CLU_043316_0_0_1"/>
<dbReference type="OMA" id="KNGKWWQ"/>
<dbReference type="OrthoDB" id="16715at766764"/>
<dbReference type="Proteomes" id="UP000001429">
    <property type="component" value="Chromosome 1, Supercontig 1.1"/>
</dbReference>
<dbReference type="GO" id="GO:0005886">
    <property type="term" value="C:plasma membrane"/>
    <property type="evidence" value="ECO:0007669"/>
    <property type="project" value="UniProtKB-SubCell"/>
</dbReference>
<dbReference type="GO" id="GO:0030447">
    <property type="term" value="P:filamentous growth"/>
    <property type="evidence" value="ECO:0007669"/>
    <property type="project" value="UniProtKB-ARBA"/>
</dbReference>
<dbReference type="GO" id="GO:0030833">
    <property type="term" value="P:regulation of actin filament polymerization"/>
    <property type="evidence" value="ECO:0007669"/>
    <property type="project" value="TreeGrafter"/>
</dbReference>
<dbReference type="CDD" id="cd11855">
    <property type="entry name" value="SH3_Sho1p"/>
    <property type="match status" value="1"/>
</dbReference>
<dbReference type="FunFam" id="2.30.30.40:FF:000213">
    <property type="entry name" value="High osmolarity signaling protein SHO1"/>
    <property type="match status" value="1"/>
</dbReference>
<dbReference type="Gene3D" id="2.30.30.40">
    <property type="entry name" value="SH3 Domains"/>
    <property type="match status" value="1"/>
</dbReference>
<dbReference type="InterPro" id="IPR036028">
    <property type="entry name" value="SH3-like_dom_sf"/>
</dbReference>
<dbReference type="InterPro" id="IPR001452">
    <property type="entry name" value="SH3_domain"/>
</dbReference>
<dbReference type="InterPro" id="IPR035522">
    <property type="entry name" value="Sho1_SH3"/>
</dbReference>
<dbReference type="PANTHER" id="PTHR15735">
    <property type="entry name" value="FCH AND DOUBLE SH3 DOMAINS PROTEIN"/>
    <property type="match status" value="1"/>
</dbReference>
<dbReference type="PANTHER" id="PTHR15735:SF20">
    <property type="entry name" value="HIGH OSMOLARITY SIGNALING PROTEIN SHO1"/>
    <property type="match status" value="1"/>
</dbReference>
<dbReference type="Pfam" id="PF14604">
    <property type="entry name" value="SH3_9"/>
    <property type="match status" value="1"/>
</dbReference>
<dbReference type="PRINTS" id="PR00452">
    <property type="entry name" value="SH3DOMAIN"/>
</dbReference>
<dbReference type="SMART" id="SM00326">
    <property type="entry name" value="SH3"/>
    <property type="match status" value="1"/>
</dbReference>
<dbReference type="SUPFAM" id="SSF50044">
    <property type="entry name" value="SH3-domain"/>
    <property type="match status" value="1"/>
</dbReference>
<dbReference type="PROSITE" id="PS50002">
    <property type="entry name" value="SH3"/>
    <property type="match status" value="1"/>
</dbReference>
<evidence type="ECO:0000250" key="1"/>
<evidence type="ECO:0000255" key="2"/>
<evidence type="ECO:0000255" key="3">
    <source>
        <dbReference type="PROSITE-ProRule" id="PRU00192"/>
    </source>
</evidence>
<evidence type="ECO:0000256" key="4">
    <source>
        <dbReference type="SAM" id="MobiDB-lite"/>
    </source>
</evidence>
<evidence type="ECO:0000305" key="5"/>
<proteinExistence type="inferred from homology"/>
<feature type="chain" id="PRO_0000410364" description="High osmolarity signaling protein SHO1">
    <location>
        <begin position="1"/>
        <end position="385"/>
    </location>
</feature>
<feature type="topological domain" description="Cytoplasmic" evidence="2">
    <location>
        <begin position="1"/>
        <end position="12"/>
    </location>
</feature>
<feature type="transmembrane region" description="Helical" evidence="2">
    <location>
        <begin position="13"/>
        <end position="33"/>
    </location>
</feature>
<feature type="topological domain" description="Extracellular" evidence="2">
    <location>
        <begin position="34"/>
        <end position="42"/>
    </location>
</feature>
<feature type="transmembrane region" description="Helical" evidence="2">
    <location>
        <begin position="43"/>
        <end position="63"/>
    </location>
</feature>
<feature type="topological domain" description="Cytoplasmic" evidence="2">
    <location>
        <begin position="64"/>
        <end position="65"/>
    </location>
</feature>
<feature type="transmembrane region" description="Helical" evidence="2">
    <location>
        <begin position="66"/>
        <end position="86"/>
    </location>
</feature>
<feature type="topological domain" description="Extracellular" evidence="2">
    <location>
        <begin position="87"/>
        <end position="101"/>
    </location>
</feature>
<feature type="transmembrane region" description="Helical" evidence="2">
    <location>
        <begin position="102"/>
        <end position="122"/>
    </location>
</feature>
<feature type="topological domain" description="Cytoplasmic" evidence="2">
    <location>
        <begin position="123"/>
        <end position="385"/>
    </location>
</feature>
<feature type="domain" description="SH3" evidence="3">
    <location>
        <begin position="324"/>
        <end position="385"/>
    </location>
</feature>
<feature type="region of interest" description="Disordered" evidence="4">
    <location>
        <begin position="268"/>
        <end position="315"/>
    </location>
</feature>
<feature type="compositionally biased region" description="Gly residues" evidence="4">
    <location>
        <begin position="270"/>
        <end position="280"/>
    </location>
</feature>
<feature type="compositionally biased region" description="Gly residues" evidence="4">
    <location>
        <begin position="289"/>
        <end position="298"/>
    </location>
</feature>
<feature type="compositionally biased region" description="Low complexity" evidence="4">
    <location>
        <begin position="299"/>
        <end position="308"/>
    </location>
</feature>